<organism>
    <name type="scientific">Mus musculus</name>
    <name type="common">Mouse</name>
    <dbReference type="NCBI Taxonomy" id="10090"/>
    <lineage>
        <taxon>Eukaryota</taxon>
        <taxon>Metazoa</taxon>
        <taxon>Chordata</taxon>
        <taxon>Craniata</taxon>
        <taxon>Vertebrata</taxon>
        <taxon>Euteleostomi</taxon>
        <taxon>Mammalia</taxon>
        <taxon>Eutheria</taxon>
        <taxon>Euarchontoglires</taxon>
        <taxon>Glires</taxon>
        <taxon>Rodentia</taxon>
        <taxon>Myomorpha</taxon>
        <taxon>Muroidea</taxon>
        <taxon>Muridae</taxon>
        <taxon>Murinae</taxon>
        <taxon>Mus</taxon>
        <taxon>Mus</taxon>
    </lineage>
</organism>
<protein>
    <recommendedName>
        <fullName>Tyrosine-protein kinase Blk</fullName>
        <ecNumber>2.7.10.2</ecNumber>
    </recommendedName>
    <alternativeName>
        <fullName>B lymphocyte kinase</fullName>
    </alternativeName>
    <alternativeName>
        <fullName>p55-Blk</fullName>
    </alternativeName>
</protein>
<evidence type="ECO:0000250" key="1"/>
<evidence type="ECO:0000250" key="2">
    <source>
        <dbReference type="UniProtKB" id="P51451"/>
    </source>
</evidence>
<evidence type="ECO:0000255" key="3">
    <source>
        <dbReference type="PROSITE-ProRule" id="PRU00159"/>
    </source>
</evidence>
<evidence type="ECO:0000255" key="4">
    <source>
        <dbReference type="PROSITE-ProRule" id="PRU00191"/>
    </source>
</evidence>
<evidence type="ECO:0000255" key="5">
    <source>
        <dbReference type="PROSITE-ProRule" id="PRU00192"/>
    </source>
</evidence>
<evidence type="ECO:0000256" key="6">
    <source>
        <dbReference type="SAM" id="MobiDB-lite"/>
    </source>
</evidence>
<evidence type="ECO:0000269" key="7">
    <source>
    </source>
</evidence>
<evidence type="ECO:0000269" key="8">
    <source>
    </source>
</evidence>
<evidence type="ECO:0000269" key="9">
    <source>
    </source>
</evidence>
<evidence type="ECO:0000269" key="10">
    <source>
    </source>
</evidence>
<evidence type="ECO:0000269" key="11">
    <source>
    </source>
</evidence>
<evidence type="ECO:0000269" key="12">
    <source>
    </source>
</evidence>
<evidence type="ECO:0000269" key="13">
    <source>
    </source>
</evidence>
<evidence type="ECO:0000269" key="14">
    <source>
    </source>
</evidence>
<evidence type="ECO:0000269" key="15">
    <source>
    </source>
</evidence>
<evidence type="ECO:0000269" key="16">
    <source>
    </source>
</evidence>
<evidence type="ECO:0000269" key="17">
    <source>
    </source>
</evidence>
<evidence type="ECO:0000269" key="18">
    <source>
    </source>
</evidence>
<evidence type="ECO:0000269" key="19">
    <source>
    </source>
</evidence>
<evidence type="ECO:0000269" key="20">
    <source>
    </source>
</evidence>
<evidence type="ECO:0000269" key="21">
    <source>
    </source>
</evidence>
<evidence type="ECO:0000269" key="22">
    <source>
    </source>
</evidence>
<evidence type="ECO:0000269" key="23">
    <source>
    </source>
</evidence>
<evidence type="ECO:0000305" key="24"/>
<evidence type="ECO:0007829" key="25">
    <source>
        <dbReference type="PDB" id="1BLJ"/>
    </source>
</evidence>
<evidence type="ECO:0007829" key="26">
    <source>
        <dbReference type="PDB" id="1BLK"/>
    </source>
</evidence>
<proteinExistence type="evidence at protein level"/>
<dbReference type="EC" id="2.7.10.2"/>
<dbReference type="EMBL" id="M30903">
    <property type="protein sequence ID" value="AAA40453.1"/>
    <property type="molecule type" value="mRNA"/>
</dbReference>
<dbReference type="EMBL" id="AK089888">
    <property type="protein sequence ID" value="BAC40986.1"/>
    <property type="molecule type" value="mRNA"/>
</dbReference>
<dbReference type="EMBL" id="CT010240">
    <property type="protein sequence ID" value="CAJ18448.1"/>
    <property type="molecule type" value="mRNA"/>
</dbReference>
<dbReference type="EMBL" id="AC090496">
    <property type="status" value="NOT_ANNOTATED_CDS"/>
    <property type="molecule type" value="Genomic_DNA"/>
</dbReference>
<dbReference type="EMBL" id="BC030668">
    <property type="protein sequence ID" value="AAH30668.1"/>
    <property type="molecule type" value="mRNA"/>
</dbReference>
<dbReference type="CCDS" id="CCDS27200.1"/>
<dbReference type="PIR" id="A40092">
    <property type="entry name" value="A40092"/>
</dbReference>
<dbReference type="RefSeq" id="NP_031575.2">
    <property type="nucleotide sequence ID" value="NM_007549.2"/>
</dbReference>
<dbReference type="PDB" id="1BLJ">
    <property type="method" value="NMR"/>
    <property type="chains" value="A=107-218"/>
</dbReference>
<dbReference type="PDB" id="1BLK">
    <property type="method" value="NMR"/>
    <property type="chains" value="A=107-218"/>
</dbReference>
<dbReference type="PDBsum" id="1BLJ"/>
<dbReference type="PDBsum" id="1BLK"/>
<dbReference type="SMR" id="P16277"/>
<dbReference type="BioGRID" id="198356">
    <property type="interactions" value="1"/>
</dbReference>
<dbReference type="FunCoup" id="P16277">
    <property type="interactions" value="57"/>
</dbReference>
<dbReference type="IntAct" id="P16277">
    <property type="interactions" value="3"/>
</dbReference>
<dbReference type="MINT" id="P16277"/>
<dbReference type="STRING" id="10090.ENSMUSP00000014597"/>
<dbReference type="BindingDB" id="P16277"/>
<dbReference type="ChEMBL" id="CHEMBL3343"/>
<dbReference type="DrugCentral" id="P16277"/>
<dbReference type="GlyGen" id="P16277">
    <property type="glycosylation" value="1 site, 1 O-linked glycan (1 site)"/>
</dbReference>
<dbReference type="iPTMnet" id="P16277"/>
<dbReference type="PhosphoSitePlus" id="P16277"/>
<dbReference type="jPOST" id="P16277"/>
<dbReference type="PaxDb" id="10090-ENSMUSP00000014597"/>
<dbReference type="PeptideAtlas" id="P16277"/>
<dbReference type="ProteomicsDB" id="273498"/>
<dbReference type="Antibodypedia" id="3914">
    <property type="antibodies" value="609 antibodies from 38 providers"/>
</dbReference>
<dbReference type="DNASU" id="12143"/>
<dbReference type="Ensembl" id="ENSMUST00000014597.5">
    <property type="protein sequence ID" value="ENSMUSP00000014597.4"/>
    <property type="gene ID" value="ENSMUSG00000014453.5"/>
</dbReference>
<dbReference type="GeneID" id="12143"/>
<dbReference type="KEGG" id="mmu:12143"/>
<dbReference type="UCSC" id="uc007uhq.1">
    <property type="organism name" value="mouse"/>
</dbReference>
<dbReference type="AGR" id="MGI:88169"/>
<dbReference type="CTD" id="640"/>
<dbReference type="MGI" id="MGI:88169">
    <property type="gene designation" value="Blk"/>
</dbReference>
<dbReference type="VEuPathDB" id="HostDB:ENSMUSG00000014453"/>
<dbReference type="eggNOG" id="KOG0197">
    <property type="taxonomic scope" value="Eukaryota"/>
</dbReference>
<dbReference type="GeneTree" id="ENSGT00940000159864"/>
<dbReference type="HOGENOM" id="CLU_000288_7_2_1"/>
<dbReference type="InParanoid" id="P16277"/>
<dbReference type="OMA" id="TLCCKIG"/>
<dbReference type="OrthoDB" id="4062651at2759"/>
<dbReference type="PhylomeDB" id="P16277"/>
<dbReference type="TreeFam" id="TF351634"/>
<dbReference type="BRENDA" id="2.7.10.2">
    <property type="organism ID" value="3474"/>
</dbReference>
<dbReference type="BioGRID-ORCS" id="12143">
    <property type="hits" value="1 hit in 79 CRISPR screens"/>
</dbReference>
<dbReference type="ChiTaRS" id="Bik">
    <property type="organism name" value="mouse"/>
</dbReference>
<dbReference type="EvolutionaryTrace" id="P16277"/>
<dbReference type="PRO" id="PR:P16277"/>
<dbReference type="Proteomes" id="UP000000589">
    <property type="component" value="Chromosome 14"/>
</dbReference>
<dbReference type="RNAct" id="P16277">
    <property type="molecule type" value="protein"/>
</dbReference>
<dbReference type="Bgee" id="ENSMUSG00000014453">
    <property type="expression patterns" value="Expressed in spleen and 52 other cell types or tissues"/>
</dbReference>
<dbReference type="GO" id="GO:0005829">
    <property type="term" value="C:cytosol"/>
    <property type="evidence" value="ECO:0000304"/>
    <property type="project" value="Reactome"/>
</dbReference>
<dbReference type="GO" id="GO:0005886">
    <property type="term" value="C:plasma membrane"/>
    <property type="evidence" value="ECO:0007669"/>
    <property type="project" value="UniProtKB-SubCell"/>
</dbReference>
<dbReference type="GO" id="GO:0005524">
    <property type="term" value="F:ATP binding"/>
    <property type="evidence" value="ECO:0007669"/>
    <property type="project" value="UniProtKB-KW"/>
</dbReference>
<dbReference type="GO" id="GO:0004715">
    <property type="term" value="F:non-membrane spanning protein tyrosine kinase activity"/>
    <property type="evidence" value="ECO:0007669"/>
    <property type="project" value="UniProtKB-EC"/>
</dbReference>
<dbReference type="GO" id="GO:0004713">
    <property type="term" value="F:protein tyrosine kinase activity"/>
    <property type="evidence" value="ECO:0000250"/>
    <property type="project" value="UniProtKB"/>
</dbReference>
<dbReference type="GO" id="GO:0050853">
    <property type="term" value="P:B cell receptor signaling pathway"/>
    <property type="evidence" value="ECO:0007669"/>
    <property type="project" value="Ensembl"/>
</dbReference>
<dbReference type="GO" id="GO:0018108">
    <property type="term" value="P:peptidyl-tyrosine phosphorylation"/>
    <property type="evidence" value="ECO:0000250"/>
    <property type="project" value="UniProtKB"/>
</dbReference>
<dbReference type="GO" id="GO:0032024">
    <property type="term" value="P:positive regulation of insulin secretion"/>
    <property type="evidence" value="ECO:0007669"/>
    <property type="project" value="Ensembl"/>
</dbReference>
<dbReference type="CDD" id="cd10371">
    <property type="entry name" value="SH2_Src_Blk"/>
    <property type="match status" value="1"/>
</dbReference>
<dbReference type="FunFam" id="1.10.510.10:FF:000004">
    <property type="entry name" value="Tyrosine-protein kinase"/>
    <property type="match status" value="1"/>
</dbReference>
<dbReference type="FunFam" id="2.30.30.40:FF:000211">
    <property type="entry name" value="Tyrosine-protein kinase"/>
    <property type="match status" value="1"/>
</dbReference>
<dbReference type="FunFam" id="3.30.200.20:FF:000036">
    <property type="entry name" value="Tyrosine-protein kinase"/>
    <property type="match status" value="1"/>
</dbReference>
<dbReference type="FunFam" id="3.30.505.10:FF:000010">
    <property type="entry name" value="Tyrosine-protein kinase"/>
    <property type="match status" value="1"/>
</dbReference>
<dbReference type="Gene3D" id="3.30.200.20">
    <property type="entry name" value="Phosphorylase Kinase, domain 1"/>
    <property type="match status" value="1"/>
</dbReference>
<dbReference type="Gene3D" id="3.30.505.10">
    <property type="entry name" value="SH2 domain"/>
    <property type="match status" value="1"/>
</dbReference>
<dbReference type="Gene3D" id="2.30.30.40">
    <property type="entry name" value="SH3 Domains"/>
    <property type="match status" value="1"/>
</dbReference>
<dbReference type="Gene3D" id="1.10.510.10">
    <property type="entry name" value="Transferase(Phosphotransferase) domain 1"/>
    <property type="match status" value="1"/>
</dbReference>
<dbReference type="InterPro" id="IPR035853">
    <property type="entry name" value="Blk_SH2"/>
</dbReference>
<dbReference type="InterPro" id="IPR011009">
    <property type="entry name" value="Kinase-like_dom_sf"/>
</dbReference>
<dbReference type="InterPro" id="IPR050198">
    <property type="entry name" value="Non-receptor_tyrosine_kinases"/>
</dbReference>
<dbReference type="InterPro" id="IPR000719">
    <property type="entry name" value="Prot_kinase_dom"/>
</dbReference>
<dbReference type="InterPro" id="IPR017441">
    <property type="entry name" value="Protein_kinase_ATP_BS"/>
</dbReference>
<dbReference type="InterPro" id="IPR001245">
    <property type="entry name" value="Ser-Thr/Tyr_kinase_cat_dom"/>
</dbReference>
<dbReference type="InterPro" id="IPR000980">
    <property type="entry name" value="SH2"/>
</dbReference>
<dbReference type="InterPro" id="IPR036860">
    <property type="entry name" value="SH2_dom_sf"/>
</dbReference>
<dbReference type="InterPro" id="IPR036028">
    <property type="entry name" value="SH3-like_dom_sf"/>
</dbReference>
<dbReference type="InterPro" id="IPR001452">
    <property type="entry name" value="SH3_domain"/>
</dbReference>
<dbReference type="InterPro" id="IPR020635">
    <property type="entry name" value="Tyr_kinase_cat_dom"/>
</dbReference>
<dbReference type="PANTHER" id="PTHR24418">
    <property type="entry name" value="TYROSINE-PROTEIN KINASE"/>
    <property type="match status" value="1"/>
</dbReference>
<dbReference type="Pfam" id="PF07714">
    <property type="entry name" value="PK_Tyr_Ser-Thr"/>
    <property type="match status" value="1"/>
</dbReference>
<dbReference type="Pfam" id="PF00017">
    <property type="entry name" value="SH2"/>
    <property type="match status" value="1"/>
</dbReference>
<dbReference type="Pfam" id="PF00018">
    <property type="entry name" value="SH3_1"/>
    <property type="match status" value="1"/>
</dbReference>
<dbReference type="PRINTS" id="PR00401">
    <property type="entry name" value="SH2DOMAIN"/>
</dbReference>
<dbReference type="PRINTS" id="PR00452">
    <property type="entry name" value="SH3DOMAIN"/>
</dbReference>
<dbReference type="PRINTS" id="PR00109">
    <property type="entry name" value="TYRKINASE"/>
</dbReference>
<dbReference type="SMART" id="SM00252">
    <property type="entry name" value="SH2"/>
    <property type="match status" value="1"/>
</dbReference>
<dbReference type="SMART" id="SM00326">
    <property type="entry name" value="SH3"/>
    <property type="match status" value="1"/>
</dbReference>
<dbReference type="SMART" id="SM00219">
    <property type="entry name" value="TyrKc"/>
    <property type="match status" value="1"/>
</dbReference>
<dbReference type="SUPFAM" id="SSF56112">
    <property type="entry name" value="Protein kinase-like (PK-like)"/>
    <property type="match status" value="1"/>
</dbReference>
<dbReference type="SUPFAM" id="SSF55550">
    <property type="entry name" value="SH2 domain"/>
    <property type="match status" value="1"/>
</dbReference>
<dbReference type="SUPFAM" id="SSF50044">
    <property type="entry name" value="SH3-domain"/>
    <property type="match status" value="1"/>
</dbReference>
<dbReference type="PROSITE" id="PS00107">
    <property type="entry name" value="PROTEIN_KINASE_ATP"/>
    <property type="match status" value="1"/>
</dbReference>
<dbReference type="PROSITE" id="PS50011">
    <property type="entry name" value="PROTEIN_KINASE_DOM"/>
    <property type="match status" value="1"/>
</dbReference>
<dbReference type="PROSITE" id="PS50001">
    <property type="entry name" value="SH2"/>
    <property type="match status" value="1"/>
</dbReference>
<dbReference type="PROSITE" id="PS50002">
    <property type="entry name" value="SH3"/>
    <property type="match status" value="1"/>
</dbReference>
<gene>
    <name type="primary">Blk</name>
</gene>
<reference key="1">
    <citation type="journal article" date="1990" name="Science">
        <title>Specific expression of a tyrosine kinase gene, blk, in B lymphoid cells.</title>
        <authorList>
            <person name="Dymecki S.M."/>
            <person name="Niederhuber J.E."/>
            <person name="Desiderio S.V."/>
        </authorList>
    </citation>
    <scope>NUCLEOTIDE SEQUENCE [MRNA]</scope>
    <scope>FUNCTION</scope>
    <scope>TISSUE SPECIFICITY</scope>
    <source>
        <tissue>B-cell</tissue>
    </source>
</reference>
<reference key="2">
    <citation type="journal article" date="2005" name="Science">
        <title>The transcriptional landscape of the mammalian genome.</title>
        <authorList>
            <person name="Carninci P."/>
            <person name="Kasukawa T."/>
            <person name="Katayama S."/>
            <person name="Gough J."/>
            <person name="Frith M.C."/>
            <person name="Maeda N."/>
            <person name="Oyama R."/>
            <person name="Ravasi T."/>
            <person name="Lenhard B."/>
            <person name="Wells C."/>
            <person name="Kodzius R."/>
            <person name="Shimokawa K."/>
            <person name="Bajic V.B."/>
            <person name="Brenner S.E."/>
            <person name="Batalov S."/>
            <person name="Forrest A.R."/>
            <person name="Zavolan M."/>
            <person name="Davis M.J."/>
            <person name="Wilming L.G."/>
            <person name="Aidinis V."/>
            <person name="Allen J.E."/>
            <person name="Ambesi-Impiombato A."/>
            <person name="Apweiler R."/>
            <person name="Aturaliya R.N."/>
            <person name="Bailey T.L."/>
            <person name="Bansal M."/>
            <person name="Baxter L."/>
            <person name="Beisel K.W."/>
            <person name="Bersano T."/>
            <person name="Bono H."/>
            <person name="Chalk A.M."/>
            <person name="Chiu K.P."/>
            <person name="Choudhary V."/>
            <person name="Christoffels A."/>
            <person name="Clutterbuck D.R."/>
            <person name="Crowe M.L."/>
            <person name="Dalla E."/>
            <person name="Dalrymple B.P."/>
            <person name="de Bono B."/>
            <person name="Della Gatta G."/>
            <person name="di Bernardo D."/>
            <person name="Down T."/>
            <person name="Engstrom P."/>
            <person name="Fagiolini M."/>
            <person name="Faulkner G."/>
            <person name="Fletcher C.F."/>
            <person name="Fukushima T."/>
            <person name="Furuno M."/>
            <person name="Futaki S."/>
            <person name="Gariboldi M."/>
            <person name="Georgii-Hemming P."/>
            <person name="Gingeras T.R."/>
            <person name="Gojobori T."/>
            <person name="Green R.E."/>
            <person name="Gustincich S."/>
            <person name="Harbers M."/>
            <person name="Hayashi Y."/>
            <person name="Hensch T.K."/>
            <person name="Hirokawa N."/>
            <person name="Hill D."/>
            <person name="Huminiecki L."/>
            <person name="Iacono M."/>
            <person name="Ikeo K."/>
            <person name="Iwama A."/>
            <person name="Ishikawa T."/>
            <person name="Jakt M."/>
            <person name="Kanapin A."/>
            <person name="Katoh M."/>
            <person name="Kawasawa Y."/>
            <person name="Kelso J."/>
            <person name="Kitamura H."/>
            <person name="Kitano H."/>
            <person name="Kollias G."/>
            <person name="Krishnan S.P."/>
            <person name="Kruger A."/>
            <person name="Kummerfeld S.K."/>
            <person name="Kurochkin I.V."/>
            <person name="Lareau L.F."/>
            <person name="Lazarevic D."/>
            <person name="Lipovich L."/>
            <person name="Liu J."/>
            <person name="Liuni S."/>
            <person name="McWilliam S."/>
            <person name="Madan Babu M."/>
            <person name="Madera M."/>
            <person name="Marchionni L."/>
            <person name="Matsuda H."/>
            <person name="Matsuzawa S."/>
            <person name="Miki H."/>
            <person name="Mignone F."/>
            <person name="Miyake S."/>
            <person name="Morris K."/>
            <person name="Mottagui-Tabar S."/>
            <person name="Mulder N."/>
            <person name="Nakano N."/>
            <person name="Nakauchi H."/>
            <person name="Ng P."/>
            <person name="Nilsson R."/>
            <person name="Nishiguchi S."/>
            <person name="Nishikawa S."/>
            <person name="Nori F."/>
            <person name="Ohara O."/>
            <person name="Okazaki Y."/>
            <person name="Orlando V."/>
            <person name="Pang K.C."/>
            <person name="Pavan W.J."/>
            <person name="Pavesi G."/>
            <person name="Pesole G."/>
            <person name="Petrovsky N."/>
            <person name="Piazza S."/>
            <person name="Reed J."/>
            <person name="Reid J.F."/>
            <person name="Ring B.Z."/>
            <person name="Ringwald M."/>
            <person name="Rost B."/>
            <person name="Ruan Y."/>
            <person name="Salzberg S.L."/>
            <person name="Sandelin A."/>
            <person name="Schneider C."/>
            <person name="Schoenbach C."/>
            <person name="Sekiguchi K."/>
            <person name="Semple C.A."/>
            <person name="Seno S."/>
            <person name="Sessa L."/>
            <person name="Sheng Y."/>
            <person name="Shibata Y."/>
            <person name="Shimada H."/>
            <person name="Shimada K."/>
            <person name="Silva D."/>
            <person name="Sinclair B."/>
            <person name="Sperling S."/>
            <person name="Stupka E."/>
            <person name="Sugiura K."/>
            <person name="Sultana R."/>
            <person name="Takenaka Y."/>
            <person name="Taki K."/>
            <person name="Tammoja K."/>
            <person name="Tan S.L."/>
            <person name="Tang S."/>
            <person name="Taylor M.S."/>
            <person name="Tegner J."/>
            <person name="Teichmann S.A."/>
            <person name="Ueda H.R."/>
            <person name="van Nimwegen E."/>
            <person name="Verardo R."/>
            <person name="Wei C.L."/>
            <person name="Yagi K."/>
            <person name="Yamanishi H."/>
            <person name="Zabarovsky E."/>
            <person name="Zhu S."/>
            <person name="Zimmer A."/>
            <person name="Hide W."/>
            <person name="Bult C."/>
            <person name="Grimmond S.M."/>
            <person name="Teasdale R.D."/>
            <person name="Liu E.T."/>
            <person name="Brusic V."/>
            <person name="Quackenbush J."/>
            <person name="Wahlestedt C."/>
            <person name="Mattick J.S."/>
            <person name="Hume D.A."/>
            <person name="Kai C."/>
            <person name="Sasaki D."/>
            <person name="Tomaru Y."/>
            <person name="Fukuda S."/>
            <person name="Kanamori-Katayama M."/>
            <person name="Suzuki M."/>
            <person name="Aoki J."/>
            <person name="Arakawa T."/>
            <person name="Iida J."/>
            <person name="Imamura K."/>
            <person name="Itoh M."/>
            <person name="Kato T."/>
            <person name="Kawaji H."/>
            <person name="Kawagashira N."/>
            <person name="Kawashima T."/>
            <person name="Kojima M."/>
            <person name="Kondo S."/>
            <person name="Konno H."/>
            <person name="Nakano K."/>
            <person name="Ninomiya N."/>
            <person name="Nishio T."/>
            <person name="Okada M."/>
            <person name="Plessy C."/>
            <person name="Shibata K."/>
            <person name="Shiraki T."/>
            <person name="Suzuki S."/>
            <person name="Tagami M."/>
            <person name="Waki K."/>
            <person name="Watahiki A."/>
            <person name="Okamura-Oho Y."/>
            <person name="Suzuki H."/>
            <person name="Kawai J."/>
            <person name="Hayashizaki Y."/>
        </authorList>
    </citation>
    <scope>NUCLEOTIDE SEQUENCE [LARGE SCALE MRNA]</scope>
    <source>
        <strain>NOD</strain>
    </source>
</reference>
<reference key="3">
    <citation type="submission" date="2005-07" db="EMBL/GenBank/DDBJ databases">
        <title>Cloning of mouse full open reading frames in Gateway(R) system entry vector (pDONR201).</title>
        <authorList>
            <person name="Ebert L."/>
            <person name="Muenstermann E."/>
            <person name="Schatten R."/>
            <person name="Henze S."/>
            <person name="Bohn E."/>
            <person name="Mollenhauer J."/>
            <person name="Wiemann S."/>
            <person name="Schick M."/>
            <person name="Korn B."/>
        </authorList>
    </citation>
    <scope>NUCLEOTIDE SEQUENCE [LARGE SCALE MRNA]</scope>
</reference>
<reference key="4">
    <citation type="journal article" date="2009" name="PLoS Biol.">
        <title>Lineage-specific biology revealed by a finished genome assembly of the mouse.</title>
        <authorList>
            <person name="Church D.M."/>
            <person name="Goodstadt L."/>
            <person name="Hillier L.W."/>
            <person name="Zody M.C."/>
            <person name="Goldstein S."/>
            <person name="She X."/>
            <person name="Bult C.J."/>
            <person name="Agarwala R."/>
            <person name="Cherry J.L."/>
            <person name="DiCuccio M."/>
            <person name="Hlavina W."/>
            <person name="Kapustin Y."/>
            <person name="Meric P."/>
            <person name="Maglott D."/>
            <person name="Birtle Z."/>
            <person name="Marques A.C."/>
            <person name="Graves T."/>
            <person name="Zhou S."/>
            <person name="Teague B."/>
            <person name="Potamousis K."/>
            <person name="Churas C."/>
            <person name="Place M."/>
            <person name="Herschleb J."/>
            <person name="Runnheim R."/>
            <person name="Forrest D."/>
            <person name="Amos-Landgraf J."/>
            <person name="Schwartz D.C."/>
            <person name="Cheng Z."/>
            <person name="Lindblad-Toh K."/>
            <person name="Eichler E.E."/>
            <person name="Ponting C.P."/>
        </authorList>
    </citation>
    <scope>NUCLEOTIDE SEQUENCE [LARGE SCALE GENOMIC DNA]</scope>
    <source>
        <strain>C57BL/6J</strain>
    </source>
</reference>
<reference key="5">
    <citation type="journal article" date="2004" name="Genome Res.">
        <title>The status, quality, and expansion of the NIH full-length cDNA project: the Mammalian Gene Collection (MGC).</title>
        <authorList>
            <consortium name="The MGC Project Team"/>
        </authorList>
    </citation>
    <scope>NUCLEOTIDE SEQUENCE [LARGE SCALE MRNA]</scope>
    <source>
        <strain>C57BL/6J</strain>
        <tissue>Mammary gland</tissue>
    </source>
</reference>
<reference key="6">
    <citation type="journal article" date="1991" name="Proc. Natl. Acad. Sci. U.S.A.">
        <title>Anti-immunoglobulin stimulation of B lymphocytes activates src-related protein-tyrosine kinases.</title>
        <authorList>
            <person name="Burkhardt A.L."/>
            <person name="Brunswick M."/>
            <person name="Bolen J.B."/>
            <person name="Mond J.J."/>
        </authorList>
    </citation>
    <scope>ACTIVITY REGULATION</scope>
</reference>
<reference key="7">
    <citation type="journal article" date="1992" name="J. Biol. Chem.">
        <title>Structure and developmental regulation of the B-lymphoid tyrosine kinase gene blk.</title>
        <authorList>
            <person name="Dymecki S.M."/>
            <person name="Zwollo P."/>
            <person name="Zeller K."/>
            <person name="Kuhajda F.P."/>
            <person name="Desiderio S.V."/>
        </authorList>
    </citation>
    <scope>TISSUE SPECIFICITY</scope>
</reference>
<reference key="8">
    <citation type="journal article" date="1992" name="J. Immunol.">
        <title>The MB-1/B29 heterodimer couples the B cell antigen receptor to multiple src family protein tyrosine kinases.</title>
        <authorList>
            <person name="Lin J."/>
            <person name="Justement L.B."/>
        </authorList>
    </citation>
    <scope>INTERACTION WITH CD79A AND CD79B</scope>
</reference>
<reference key="9">
    <citation type="journal article" date="1993" name="Proc. Natl. Acad. Sci. U.S.A.">
        <title>Antisense oligodeoxynucleotides to the blk tyrosine kinase prevent anti-mu-chain-mediated growth inhibition and apoptosis in a B-cell lymphoma.</title>
        <authorList>
            <person name="Yao X.R."/>
            <person name="Scott D.W."/>
        </authorList>
    </citation>
    <scope>FUNCTION</scope>
</reference>
<reference key="10">
    <citation type="journal article" date="1994" name="J. Biol. Chem.">
        <title>Specific recognition of the blk promoter by the B-lymphoid transcription factor B-cell-specific activator protein.</title>
        <authorList>
            <person name="Zwollo P."/>
            <person name="Desiderio S."/>
        </authorList>
    </citation>
    <scope>INDUCTION BY PAX5</scope>
</reference>
<reference key="11">
    <citation type="journal article" date="1994" name="Proc. Natl. Acad. Sci. U.S.A.">
        <title>Temporal differences in the activation of three classes of non-transmembrane protein tyrosine kinases following B-cell antigen receptor surface engagement.</title>
        <authorList>
            <person name="Saouaf S.J."/>
            <person name="Mahajan S."/>
            <person name="Rowley R.B."/>
            <person name="Kut S.A."/>
            <person name="Fargnoli J."/>
            <person name="Burkhardt A.L."/>
            <person name="Tsukada S."/>
            <person name="Witte O.N."/>
            <person name="Bolen J.B."/>
        </authorList>
    </citation>
    <scope>ACTIVITY REGULATION</scope>
</reference>
<reference key="12">
    <citation type="journal article" date="1995" name="J. Immunol.">
        <title>Differential expression of the blk and ret tyrosine kinases during B lineage development is dependent on Ig rearrangement.</title>
        <authorList>
            <person name="Wasserman R."/>
            <person name="Li Y.S."/>
            <person name="Hardy R.R."/>
        </authorList>
    </citation>
    <scope>FUNCTION</scope>
    <scope>INDUCTION</scope>
</reference>
<reference key="13">
    <citation type="journal article" date="1995" name="J. Biol. Chem.">
        <title>Reconstitution of the B cell antigen receptor signaling components in COS cells.</title>
        <authorList>
            <person name="Saouaf S.J."/>
            <person name="Kut S.A."/>
            <person name="Fargnoli J."/>
            <person name="Rowley R.B."/>
            <person name="Bolen J.B."/>
            <person name="Mahajan S."/>
        </authorList>
    </citation>
    <scope>FUNCTION IN PHOSPHORYLATION OF CD79A AND CD79B</scope>
    <scope>INTERACTION WITH CD79A AND CD79B</scope>
    <scope>SUBCELLULAR LOCATION</scope>
    <scope>MUTAGENESIS OF ARG-145</scope>
</reference>
<reference key="14">
    <citation type="journal article" date="1995" name="Mol. Cell. Biol.">
        <title>Src family protein tyrosine kinases induce autoactivation of Bruton's tyrosine kinase.</title>
        <authorList>
            <person name="Mahajan S."/>
            <person name="Fargnoli J."/>
            <person name="Burkhardt A.L."/>
            <person name="Kut S.A."/>
            <person name="Saouaf S.J."/>
            <person name="Bolen J.B."/>
        </authorList>
    </citation>
    <scope>FUNCTION IN REGULATION OF BTK ACTIVITY</scope>
</reference>
<reference key="15">
    <citation type="journal article" date="1997" name="Biochem. Biophys. Res. Commun.">
        <title>Palmitylation of Src family tyrosine kinases regulates functional interaction with a B cell substrate.</title>
        <authorList>
            <person name="Saouaf S.J."/>
            <person name="Wolven A."/>
            <person name="Resh M.D."/>
            <person name="Bolen J.B."/>
        </authorList>
    </citation>
    <scope>FUNCTION IN PHOSPHORYLATION OF CD79A</scope>
</reference>
<reference key="16">
    <citation type="journal article" date="1998" name="J. Biol. Chem.">
        <title>The transcription factor NF-kappaB/p50 interacts with the blk gene during B cell activation.</title>
        <authorList>
            <person name="Zwollo P."/>
            <person name="Rao S."/>
            <person name="Wallin J.J."/>
            <person name="Gackstetter E.R."/>
            <person name="Koshland M.E."/>
        </authorList>
    </citation>
    <scope>INDUCTION</scope>
</reference>
<reference key="17">
    <citation type="journal article" date="1998" name="Proc. Natl. Acad. Sci. U.S.A.">
        <title>Malignant transformation of early lymphoid progenitors in mice expressing an activated Blk tyrosine kinase.</title>
        <authorList>
            <person name="Malek S.N."/>
            <person name="Dordai D.I."/>
            <person name="Reim J."/>
            <person name="Dintzis H."/>
            <person name="Desiderio S."/>
        </authorList>
    </citation>
    <scope>FUNCTION</scope>
    <scope>MUTAGENESIS OF TYR-495</scope>
</reference>
<reference key="18">
    <citation type="journal article" date="1999" name="Proc. Natl. Acad. Sci. U.S.A.">
        <title>Regulation of the Src family tyrosine kinase Blk through E6AP-mediated ubiquitination.</title>
        <authorList>
            <person name="Oda H."/>
            <person name="Kumar S."/>
            <person name="Howley P.M."/>
        </authorList>
    </citation>
    <scope>UBIQUITINATION</scope>
</reference>
<reference key="19">
    <citation type="journal article" date="2003" name="J. Exp. Med.">
        <title>Mimicry of pre-B-cell receptor signaling by activation of the tyrosine kinase Blk.</title>
        <authorList>
            <person name="Tretter T."/>
            <person name="Ross A.E."/>
            <person name="Dordai D.I."/>
            <person name="Desiderio S."/>
        </authorList>
    </citation>
    <scope>FUNCTION</scope>
    <scope>MUTAGENESIS OF TYR-495</scope>
</reference>
<reference key="20">
    <citation type="journal article" date="2003" name="Nat. Immunol.">
        <title>Essential role of Src-family protein tyrosine kinases in NF-kappaB activation during B cell development.</title>
        <authorList>
            <person name="Saijo K."/>
            <person name="Schmedt C."/>
            <person name="Su I.H."/>
            <person name="Karasuyama H."/>
            <person name="Lowell C.A."/>
            <person name="Reth M."/>
            <person name="Adachi T."/>
            <person name="Patke A."/>
            <person name="Santana A."/>
            <person name="Tarakhovsky A."/>
        </authorList>
    </citation>
    <scope>FUNCTION</scope>
</reference>
<reference key="21">
    <citation type="journal article" date="2010" name="Cell">
        <title>A tissue-specific atlas of mouse protein phosphorylation and expression.</title>
        <authorList>
            <person name="Huttlin E.L."/>
            <person name="Jedrychowski M.P."/>
            <person name="Elias J.E."/>
            <person name="Goswami T."/>
            <person name="Rad R."/>
            <person name="Beausoleil S.A."/>
            <person name="Villen J."/>
            <person name="Haas W."/>
            <person name="Sowa M.E."/>
            <person name="Gygi S.P."/>
        </authorList>
    </citation>
    <scope>IDENTIFICATION BY MASS SPECTROMETRY [LARGE SCALE ANALYSIS]</scope>
    <source>
        <tissue>Spleen</tissue>
    </source>
</reference>
<reference key="22">
    <citation type="journal article" date="2013" name="Immunity">
        <title>A network of high-mobility group box transcription factors programs innate interleukin-17 production.</title>
        <authorList>
            <consortium name="Immunological Genome Project Consortium"/>
            <person name="Malhotra N."/>
            <person name="Narayan K."/>
            <person name="Cho O.H."/>
            <person name="Sylvia K.E."/>
            <person name="Yin C."/>
            <person name="Melichar H."/>
            <person name="Rashighi M."/>
            <person name="Lefebvre V."/>
            <person name="Harris J.E."/>
            <person name="Berg L.J."/>
            <person name="Kang J."/>
        </authorList>
    </citation>
    <scope>TISSUE SPECIFICITY</scope>
</reference>
<reference key="23">
    <citation type="journal article" date="1996" name="Biochemistry">
        <title>The three-dimensional solution structure of the SH2 domain from p55blk kinase.</title>
        <authorList>
            <person name="Metzler W.J."/>
            <person name="Leiting B."/>
            <person name="Pryor K."/>
            <person name="Mueller L."/>
            <person name="Farmer B.T. II"/>
        </authorList>
    </citation>
    <scope>STRUCTURE BY NMR OF SH2 DOMAIN</scope>
</reference>
<sequence>MGLLSSKRQVSEKGKGWSPVKIRTQDKAPPPLPPLVVFNHLAPPSPNQDPDEEERFVVALFDYAAVNDRDLQVLKGEKLQVLRSTGDWWLARSLVTGREGYVPSNFVAPVETLEVEKWFFRTISRKDAERQLLAPMNKAGSFLIRESESNKGAFSLSVKDITTQGEVVKHYKIRSLDNGGYYISPRITFPTLQALVQHYSKKGDGLCQKLTLPCVNLAPKNLWAQDEWEIPRQSLKLVRKLGSGQFGEVWMGYYKNNMKVAIKTLKEGTMSPEAFLGEANVMKTLQHERLVRLYAVVTREPIYIVTEYMARGCLLDFLKTDEGSRLSLPRLIDMSAQVAEGMAYIERMNSIHRDLRAANILVSETLCCKIADFGLARIIDSEYTAQEGAKFPIKWTAPEAIHFGVFTIKADVWSFGVLLMEIVTYGRVPYPGMSNPEVIRSLEHGYRMPCPETCPPELYNDIITECWRGRPEERPTFEFLQSVLEDFYTATEGQYELQP</sequence>
<accession>P16277</accession>
<accession>Q8K2M8</accession>
<comment type="function">
    <text evidence="2 8 9 14 16 17 18 19 21 22">Non-receptor tyrosine kinase involved in B-lymphocyte development, differentiation and signaling. B-cell receptor (BCR) signaling requires a tight regulation of several protein tyrosine kinases and phosphatases, and associated coreceptors (PubMed:12563261, PubMed:14662906, PubMed:2404338, PubMed:7608542, PubMed:7690139, PubMed:9636152). Binding of antigen to the B-cell antigen receptor (BCR) triggers signaling that ultimately leads to B-cell activation (PubMed:12563261, PubMed:14662906, PubMed:2404338, PubMed:7608542, PubMed:7690139). Signaling through BLK plays an important role in transmitting signals through surface immunoglobulins and supports the pro-B to pre-B transition, as well as the signaling for growth arrest and apoptosis downstream of B-cell receptor (PubMed:12563261, PubMed:14662906, PubMed:2404338, PubMed:7608542, PubMed:7690139). Specifically binds and phosphorylates CD79A at 'Tyr-188'and 'Tyr-199', as well as CD79B at 'Tyr-196' and 'Tyr-207' (PubMed:7592958, PubMed:9177269). Also phosphorylates the immunoglobulin G receptor FCGR2 (By similarity). With FYN and LYN, plays an essential role in pre-B-cell receptor (pre-BCR)-mediated NF-kappa-B activation (PubMed:12563261, PubMed:14662906). Also contributes to BTK activation by indirectly stimulating BTK intramolecular autophosphorylation (PubMed:7565679). In pancreatic islets, acts as a modulator of beta-cells function through the up-regulation of PDX1 and NKX6-1 and consequent stimulation of insulin secretion in response to glucose (By similarity). Phosphorylates CGAS, promoting retention of CGAS in the cytosol (By similarity).</text>
</comment>
<comment type="catalytic activity">
    <reaction>
        <text>L-tyrosyl-[protein] + ATP = O-phospho-L-tyrosyl-[protein] + ADP + H(+)</text>
        <dbReference type="Rhea" id="RHEA:10596"/>
        <dbReference type="Rhea" id="RHEA-COMP:10136"/>
        <dbReference type="Rhea" id="RHEA-COMP:20101"/>
        <dbReference type="ChEBI" id="CHEBI:15378"/>
        <dbReference type="ChEBI" id="CHEBI:30616"/>
        <dbReference type="ChEBI" id="CHEBI:46858"/>
        <dbReference type="ChEBI" id="CHEBI:61978"/>
        <dbReference type="ChEBI" id="CHEBI:456216"/>
        <dbReference type="EC" id="2.7.10.2"/>
    </reaction>
</comment>
<comment type="activity regulation">
    <text evidence="12 15">Antibody-mediated surface engagement of the B-cell antigen receptor (BCR) which results in the phosphorylation of BLK on tyrosine residues, stimulates the enzymatic activity.</text>
</comment>
<comment type="subunit">
    <text evidence="1 10 17">Interacts with CBL (via SH2 domain) (By similarity). Interacts with CD79A and CD79B (via SH2 domain).</text>
</comment>
<comment type="subcellular location">
    <subcellularLocation>
        <location evidence="1">Cell membrane</location>
        <topology evidence="1">Lipid-anchor</topology>
    </subcellularLocation>
    <text evidence="1 17">Present and active in lipid rafts (By similarity). Membrane location is required for the phosphorylation of CD79A and CD79B.</text>
</comment>
<comment type="tissue specificity">
    <text evidence="11 13 14">Expressed in immature Vgamma2 gamma-delta T-cells (at protein level) (PubMed:23562159). Expressed in the B-cell lineage (PubMed:1537861, PubMed:2404338).</text>
</comment>
<comment type="induction">
    <text evidence="18 20 23">Expression increases during B-cell differentiation and is under the control of the B-cell specific transcription factors PAX5 and NF-kappa-B.</text>
</comment>
<comment type="PTM">
    <text>Phosphorylated on tyrosine residues after antibody-mediated surface engagement of the B-cell antigen receptor (BCR).</text>
</comment>
<comment type="PTM">
    <text evidence="7">Ubiquitination of activated BLK by the UBE3A ubiquitin protein ligase leads to its degradation by the ubiquitin-proteasome pathway.</text>
</comment>
<comment type="similarity">
    <text evidence="3">Belongs to the protein kinase superfamily. Tyr protein kinase family. SRC subfamily.</text>
</comment>
<feature type="initiator methionine" description="Removed">
    <location>
        <position position="1"/>
    </location>
</feature>
<feature type="chain" id="PRO_0000088062" description="Tyrosine-protein kinase Blk">
    <location>
        <begin position="2"/>
        <end position="499"/>
    </location>
</feature>
<feature type="domain" description="SH3" evidence="5">
    <location>
        <begin position="52"/>
        <end position="112"/>
    </location>
</feature>
<feature type="domain" description="SH2" evidence="4">
    <location>
        <begin position="118"/>
        <end position="214"/>
    </location>
</feature>
<feature type="domain" description="Protein kinase" evidence="3">
    <location>
        <begin position="235"/>
        <end position="488"/>
    </location>
</feature>
<feature type="region of interest" description="Disordered" evidence="6">
    <location>
        <begin position="1"/>
        <end position="34"/>
    </location>
</feature>
<feature type="active site" description="Proton acceptor" evidence="3">
    <location>
        <position position="354"/>
    </location>
</feature>
<feature type="binding site" evidence="3">
    <location>
        <begin position="241"/>
        <end position="249"/>
    </location>
    <ligand>
        <name>ATP</name>
        <dbReference type="ChEBI" id="CHEBI:30616"/>
    </ligand>
</feature>
<feature type="binding site" evidence="3">
    <location>
        <position position="263"/>
    </location>
    <ligand>
        <name>ATP</name>
        <dbReference type="ChEBI" id="CHEBI:30616"/>
    </ligand>
</feature>
<feature type="modified residue" description="Phosphotyrosine; by autocatalysis" evidence="1">
    <location>
        <position position="383"/>
    </location>
</feature>
<feature type="lipid moiety-binding region" description="N-myristoyl glycine" evidence="1">
    <location>
        <position position="2"/>
    </location>
</feature>
<feature type="mutagenesis site" description="Impairs the interaction with CD79A and CD79B." evidence="17">
    <original>R</original>
    <variation>K</variation>
    <location>
        <position position="145"/>
    </location>
</feature>
<feature type="mutagenesis site" description="Leads to constitutive activation of BLK." evidence="9 22">
    <original>Y</original>
    <variation>F</variation>
    <location>
        <position position="495"/>
    </location>
</feature>
<feature type="sequence conflict" description="In Ref. 1; AAA40453." evidence="24" ref="1">
    <original>E</original>
    <variation>V</variation>
    <location>
        <position position="421"/>
    </location>
</feature>
<feature type="strand" evidence="25">
    <location>
        <begin position="116"/>
        <end position="119"/>
    </location>
</feature>
<feature type="helix" evidence="25">
    <location>
        <begin position="125"/>
        <end position="132"/>
    </location>
</feature>
<feature type="strand" evidence="25">
    <location>
        <begin position="142"/>
        <end position="144"/>
    </location>
</feature>
<feature type="strand" evidence="26">
    <location>
        <begin position="150"/>
        <end position="152"/>
    </location>
</feature>
<feature type="strand" evidence="25">
    <location>
        <begin position="154"/>
        <end position="158"/>
    </location>
</feature>
<feature type="strand" evidence="26">
    <location>
        <begin position="160"/>
        <end position="162"/>
    </location>
</feature>
<feature type="turn" evidence="25">
    <location>
        <begin position="163"/>
        <end position="165"/>
    </location>
</feature>
<feature type="strand" evidence="25">
    <location>
        <begin position="171"/>
        <end position="176"/>
    </location>
</feature>
<feature type="turn" evidence="25">
    <location>
        <begin position="177"/>
        <end position="179"/>
    </location>
</feature>
<feature type="strand" evidence="25">
    <location>
        <begin position="180"/>
        <end position="184"/>
    </location>
</feature>
<feature type="strand" evidence="25">
    <location>
        <begin position="187"/>
        <end position="191"/>
    </location>
</feature>
<feature type="helix" evidence="25">
    <location>
        <begin position="192"/>
        <end position="201"/>
    </location>
</feature>
<feature type="strand" evidence="25">
    <location>
        <begin position="204"/>
        <end position="208"/>
    </location>
</feature>
<keyword id="KW-0002">3D-structure</keyword>
<keyword id="KW-0067">ATP-binding</keyword>
<keyword id="KW-1003">Cell membrane</keyword>
<keyword id="KW-0418">Kinase</keyword>
<keyword id="KW-0449">Lipoprotein</keyword>
<keyword id="KW-0472">Membrane</keyword>
<keyword id="KW-0519">Myristate</keyword>
<keyword id="KW-0547">Nucleotide-binding</keyword>
<keyword id="KW-0597">Phosphoprotein</keyword>
<keyword id="KW-1185">Reference proteome</keyword>
<keyword id="KW-0727">SH2 domain</keyword>
<keyword id="KW-0728">SH3 domain</keyword>
<keyword id="KW-0808">Transferase</keyword>
<keyword id="KW-0829">Tyrosine-protein kinase</keyword>
<keyword id="KW-0832">Ubl conjugation</keyword>
<name>BLK_MOUSE</name>